<proteinExistence type="inferred from homology"/>
<protein>
    <recommendedName>
        <fullName evidence="1">GMP synthase [glutamine-hydrolyzing] subunit B</fullName>
        <ecNumber evidence="1">6.3.5.2</ecNumber>
    </recommendedName>
    <alternativeName>
        <fullName evidence="1">GMP synthetase</fullName>
    </alternativeName>
</protein>
<organism>
    <name type="scientific">Methanoregula boonei (strain DSM 21154 / JCM 14090 / 6A8)</name>
    <dbReference type="NCBI Taxonomy" id="456442"/>
    <lineage>
        <taxon>Archaea</taxon>
        <taxon>Methanobacteriati</taxon>
        <taxon>Methanobacteriota</taxon>
        <taxon>Stenosarchaea group</taxon>
        <taxon>Methanomicrobia</taxon>
        <taxon>Methanomicrobiales</taxon>
        <taxon>Methanoregulaceae</taxon>
        <taxon>Methanoregula</taxon>
    </lineage>
</organism>
<accession>A7IA92</accession>
<evidence type="ECO:0000255" key="1">
    <source>
        <dbReference type="HAMAP-Rule" id="MF_00345"/>
    </source>
</evidence>
<dbReference type="EC" id="6.3.5.2" evidence="1"/>
<dbReference type="EMBL" id="CP000780">
    <property type="protein sequence ID" value="ABS56653.1"/>
    <property type="molecule type" value="Genomic_DNA"/>
</dbReference>
<dbReference type="RefSeq" id="WP_012107711.1">
    <property type="nucleotide sequence ID" value="NC_009712.1"/>
</dbReference>
<dbReference type="SMR" id="A7IA92"/>
<dbReference type="STRING" id="456442.Mboo_2139"/>
<dbReference type="GeneID" id="5409957"/>
<dbReference type="KEGG" id="mbn:Mboo_2139"/>
<dbReference type="eggNOG" id="arCOG00085">
    <property type="taxonomic scope" value="Archaea"/>
</dbReference>
<dbReference type="HOGENOM" id="CLU_014340_0_0_2"/>
<dbReference type="OrthoDB" id="33844at2157"/>
<dbReference type="UniPathway" id="UPA00189">
    <property type="reaction ID" value="UER00296"/>
</dbReference>
<dbReference type="Proteomes" id="UP000002408">
    <property type="component" value="Chromosome"/>
</dbReference>
<dbReference type="GO" id="GO:0005829">
    <property type="term" value="C:cytosol"/>
    <property type="evidence" value="ECO:0007669"/>
    <property type="project" value="TreeGrafter"/>
</dbReference>
<dbReference type="GO" id="GO:0005524">
    <property type="term" value="F:ATP binding"/>
    <property type="evidence" value="ECO:0007669"/>
    <property type="project" value="UniProtKB-UniRule"/>
</dbReference>
<dbReference type="GO" id="GO:0003921">
    <property type="term" value="F:GMP synthase activity"/>
    <property type="evidence" value="ECO:0007669"/>
    <property type="project" value="InterPro"/>
</dbReference>
<dbReference type="CDD" id="cd01997">
    <property type="entry name" value="GMP_synthase_C"/>
    <property type="match status" value="1"/>
</dbReference>
<dbReference type="FunFam" id="3.40.50.620:FF:000208">
    <property type="entry name" value="GMP synthase [glutamine-hydrolyzing] subunit B"/>
    <property type="match status" value="1"/>
</dbReference>
<dbReference type="Gene3D" id="3.30.300.10">
    <property type="match status" value="1"/>
</dbReference>
<dbReference type="Gene3D" id="3.40.50.620">
    <property type="entry name" value="HUPs"/>
    <property type="match status" value="1"/>
</dbReference>
<dbReference type="HAMAP" id="MF_00345">
    <property type="entry name" value="GMP_synthase_B"/>
    <property type="match status" value="1"/>
</dbReference>
<dbReference type="InterPro" id="IPR001674">
    <property type="entry name" value="GMP_synth_C"/>
</dbReference>
<dbReference type="InterPro" id="IPR026598">
    <property type="entry name" value="GMP_synthase_B"/>
</dbReference>
<dbReference type="InterPro" id="IPR025777">
    <property type="entry name" value="GMPS_ATP_PPase_dom"/>
</dbReference>
<dbReference type="InterPro" id="IPR022310">
    <property type="entry name" value="NAD/GMP_synthase"/>
</dbReference>
<dbReference type="InterPro" id="IPR014729">
    <property type="entry name" value="Rossmann-like_a/b/a_fold"/>
</dbReference>
<dbReference type="NCBIfam" id="TIGR00884">
    <property type="entry name" value="guaA_Cterm"/>
    <property type="match status" value="1"/>
</dbReference>
<dbReference type="PANTHER" id="PTHR11922:SF2">
    <property type="entry name" value="GMP SYNTHASE [GLUTAMINE-HYDROLYZING]"/>
    <property type="match status" value="1"/>
</dbReference>
<dbReference type="PANTHER" id="PTHR11922">
    <property type="entry name" value="GMP SYNTHASE-RELATED"/>
    <property type="match status" value="1"/>
</dbReference>
<dbReference type="Pfam" id="PF00958">
    <property type="entry name" value="GMP_synt_C"/>
    <property type="match status" value="1"/>
</dbReference>
<dbReference type="Pfam" id="PF02540">
    <property type="entry name" value="NAD_synthase"/>
    <property type="match status" value="1"/>
</dbReference>
<dbReference type="SUPFAM" id="SSF52402">
    <property type="entry name" value="Adenine nucleotide alpha hydrolases-like"/>
    <property type="match status" value="1"/>
</dbReference>
<dbReference type="SUPFAM" id="SSF54810">
    <property type="entry name" value="GMP synthetase C-terminal dimerisation domain"/>
    <property type="match status" value="1"/>
</dbReference>
<dbReference type="PROSITE" id="PS51553">
    <property type="entry name" value="GMPS_ATP_PPASE"/>
    <property type="match status" value="1"/>
</dbReference>
<feature type="chain" id="PRO_1000048375" description="GMP synthase [glutamine-hydrolyzing] subunit B">
    <location>
        <begin position="1"/>
        <end position="305"/>
    </location>
</feature>
<feature type="domain" description="GMPS ATP-PPase" evidence="1">
    <location>
        <begin position="2"/>
        <end position="184"/>
    </location>
</feature>
<feature type="binding site" evidence="1">
    <location>
        <begin position="29"/>
        <end position="35"/>
    </location>
    <ligand>
        <name>ATP</name>
        <dbReference type="ChEBI" id="CHEBI:30616"/>
    </ligand>
</feature>
<sequence length="305" mass="33434">MVKTEKFIQKSVEEIQKEAGNEKVVMALSGGVDSSVCASLAARAIGDRLIPIYIDTGLMRKGETERIKAVFGNIRLQVVDAGDEFVAALAGITDPEKKRKAIGERFIRVFEREAKKSGATCLLQGTIYPDRIESEGGIKSHHNVGGMPEHTAFKKVIEPIRDLYKDEVREVAGALGLPPEIQHRMPFPGPGLAVRILGEVTKEKVAVIREANWIAESEIVEKYRPWQCFAALIGLGTGVKGDNRIHGWIVAVRAVNSRDGMTADPLEIPFADLVRIGSRITAEIPSVARVVYDITPKPPATIEYE</sequence>
<comment type="function">
    <text evidence="1">Catalyzes the synthesis of GMP from XMP.</text>
</comment>
<comment type="catalytic activity">
    <reaction evidence="1">
        <text>XMP + L-glutamine + ATP + H2O = GMP + L-glutamate + AMP + diphosphate + 2 H(+)</text>
        <dbReference type="Rhea" id="RHEA:11680"/>
        <dbReference type="ChEBI" id="CHEBI:15377"/>
        <dbReference type="ChEBI" id="CHEBI:15378"/>
        <dbReference type="ChEBI" id="CHEBI:29985"/>
        <dbReference type="ChEBI" id="CHEBI:30616"/>
        <dbReference type="ChEBI" id="CHEBI:33019"/>
        <dbReference type="ChEBI" id="CHEBI:57464"/>
        <dbReference type="ChEBI" id="CHEBI:58115"/>
        <dbReference type="ChEBI" id="CHEBI:58359"/>
        <dbReference type="ChEBI" id="CHEBI:456215"/>
        <dbReference type="EC" id="6.3.5.2"/>
    </reaction>
</comment>
<comment type="pathway">
    <text evidence="1">Purine metabolism; GMP biosynthesis; GMP from XMP (L-Gln route): step 1/1.</text>
</comment>
<comment type="subunit">
    <text evidence="1">Heterodimer composed of a glutamine amidotransferase subunit (A) and a GMP-binding subunit (B).</text>
</comment>
<gene>
    <name evidence="1" type="primary">guaAB</name>
    <name type="ordered locus">Mboo_2139</name>
</gene>
<reference key="1">
    <citation type="journal article" date="2015" name="Microbiology">
        <title>Genome of Methanoregula boonei 6A8 reveals adaptations to oligotrophic peatland environments.</title>
        <authorList>
            <person name="Braeuer S."/>
            <person name="Cadillo-Quiroz H."/>
            <person name="Kyrpides N."/>
            <person name="Woyke T."/>
            <person name="Goodwin L."/>
            <person name="Detter C."/>
            <person name="Podell S."/>
            <person name="Yavitt J.B."/>
            <person name="Zinder S.H."/>
        </authorList>
    </citation>
    <scope>NUCLEOTIDE SEQUENCE [LARGE SCALE GENOMIC DNA]</scope>
    <source>
        <strain>DSM 21154 / JCM 14090 / 6A8</strain>
    </source>
</reference>
<keyword id="KW-0067">ATP-binding</keyword>
<keyword id="KW-0332">GMP biosynthesis</keyword>
<keyword id="KW-0436">Ligase</keyword>
<keyword id="KW-0547">Nucleotide-binding</keyword>
<keyword id="KW-0658">Purine biosynthesis</keyword>
<keyword id="KW-1185">Reference proteome</keyword>
<name>GUAAB_METB6</name>